<keyword id="KW-0030">Aminoacyl-tRNA synthetase</keyword>
<keyword id="KW-0067">ATP-binding</keyword>
<keyword id="KW-0963">Cytoplasm</keyword>
<keyword id="KW-0436">Ligase</keyword>
<keyword id="KW-0547">Nucleotide-binding</keyword>
<keyword id="KW-0648">Protein biosynthesis</keyword>
<reference key="1">
    <citation type="journal article" date="2002" name="Proc. Natl. Acad. Sci. U.S.A.">
        <title>Genome sequence of a serotype M3 strain of group A Streptococcus: phage-encoded toxins, the high-virulence phenotype, and clone emergence.</title>
        <authorList>
            <person name="Beres S.B."/>
            <person name="Sylva G.L."/>
            <person name="Barbian K.D."/>
            <person name="Lei B."/>
            <person name="Hoff J.S."/>
            <person name="Mammarella N.D."/>
            <person name="Liu M.-Y."/>
            <person name="Smoot J.C."/>
            <person name="Porcella S.F."/>
            <person name="Parkins L.D."/>
            <person name="Campbell D.S."/>
            <person name="Smith T.M."/>
            <person name="McCormick J.K."/>
            <person name="Leung D.Y.M."/>
            <person name="Schlievert P.M."/>
            <person name="Musser J.M."/>
        </authorList>
    </citation>
    <scope>NUCLEOTIDE SEQUENCE [LARGE SCALE GENOMIC DNA]</scope>
    <source>
        <strain>ATCC BAA-595 / MGAS315</strain>
    </source>
</reference>
<comment type="catalytic activity">
    <reaction evidence="1">
        <text>tRNA(Leu) + L-leucine + ATP = L-leucyl-tRNA(Leu) + AMP + diphosphate</text>
        <dbReference type="Rhea" id="RHEA:11688"/>
        <dbReference type="Rhea" id="RHEA-COMP:9613"/>
        <dbReference type="Rhea" id="RHEA-COMP:9622"/>
        <dbReference type="ChEBI" id="CHEBI:30616"/>
        <dbReference type="ChEBI" id="CHEBI:33019"/>
        <dbReference type="ChEBI" id="CHEBI:57427"/>
        <dbReference type="ChEBI" id="CHEBI:78442"/>
        <dbReference type="ChEBI" id="CHEBI:78494"/>
        <dbReference type="ChEBI" id="CHEBI:456215"/>
        <dbReference type="EC" id="6.1.1.4"/>
    </reaction>
</comment>
<comment type="subcellular location">
    <subcellularLocation>
        <location evidence="1">Cytoplasm</location>
    </subcellularLocation>
</comment>
<comment type="similarity">
    <text evidence="1">Belongs to the class-I aminoacyl-tRNA synthetase family.</text>
</comment>
<gene>
    <name evidence="1" type="primary">leuS</name>
    <name type="ordered locus">SpyM3_0134</name>
</gene>
<protein>
    <recommendedName>
        <fullName evidence="1">Leucine--tRNA ligase</fullName>
        <ecNumber evidence="1">6.1.1.4</ecNumber>
    </recommendedName>
    <alternativeName>
        <fullName evidence="1">Leucyl-tRNA synthetase</fullName>
        <shortName evidence="1">LeuRS</shortName>
    </alternativeName>
</protein>
<accession>P0DG44</accession>
<accession>Q8K8S1</accession>
<sequence>MTFYDHTAIEPKWQAFWADNHTFKTGTDASKPKFYALDMFPYPSGAGLHVGHPEGYTATDILSRFKRAQGHNVLHPMGWDAFGLPAEQYAMDTGNDPAEFTAENIANFKRQINALGFSYDWDREVNTTDPNYYKWTQWIFTKLYEKGLAYEAEVPVNWVEELGTAIANEEVLPDGTSERGGYPVVRKPMRQWMLKITVYAERLLEDLEEVDWPESIKDMQRNWIGKSTGANVTFKVKDTDKNFTVFTTRPDTLFGATYAVLAPEHALVDAITTADQAEAVADYKRQASLKSDLARTDLAKEKTGVWTGSYAINPVNGKEIPVWIADYVLASYGTGAIMAVPAHDERDWEFAKQFNLDIIPVLEGGNVEEAAFTEDGLHINSGFLDGLDKASAIAKMVEWLEAEGVGNEKVTYRLRDWLFSRQRYWGEPIPIIHWEDGTSTAVPESELPLVLPVTKDIRPSGTGESPLANVTDWLEVTREDGVKGRRETNTMPQWAGSSWYYLRYIDPHNTEKLADEELLKQWLPVDIYVGGAEHAVLHLLYARFWHKVLYDLGVVPTKEPFQKLFNQGMILGTSYRDSRGALVATDKVEKRDGSFFHVETGEELEQAPAKMSKSLKNVVNPDDVVEQYGADTLRVYEMFMGPLDASIAWSEEGLEGSRKFLDRVYRLITTKEITEENSGALDKVYNETVKAVTEQVDQMKFNTAIAQLMVFVNAANKEDKLFSDYAKGFVQLIAPFAPHLGEELWQALTASGESISYVPWPSYDESKLVENDVEIVVQIKGKVKAKLVVAKDLSREELQEVALANEKVQAEIAGKDIIKVIAVPNKLVNIVIK</sequence>
<name>SYL_STRP3</name>
<dbReference type="EC" id="6.1.1.4" evidence="1"/>
<dbReference type="EMBL" id="AE014074">
    <property type="protein sequence ID" value="AAM78741.1"/>
    <property type="molecule type" value="Genomic_DNA"/>
</dbReference>
<dbReference type="RefSeq" id="WP_011054143.1">
    <property type="nucleotide sequence ID" value="NC_004070.1"/>
</dbReference>
<dbReference type="SMR" id="P0DG44"/>
<dbReference type="KEGG" id="spg:SpyM3_0134"/>
<dbReference type="HOGENOM" id="CLU_004427_0_0_9"/>
<dbReference type="Proteomes" id="UP000000564">
    <property type="component" value="Chromosome"/>
</dbReference>
<dbReference type="GO" id="GO:0005829">
    <property type="term" value="C:cytosol"/>
    <property type="evidence" value="ECO:0007669"/>
    <property type="project" value="TreeGrafter"/>
</dbReference>
<dbReference type="GO" id="GO:0002161">
    <property type="term" value="F:aminoacyl-tRNA deacylase activity"/>
    <property type="evidence" value="ECO:0007669"/>
    <property type="project" value="InterPro"/>
</dbReference>
<dbReference type="GO" id="GO:0005524">
    <property type="term" value="F:ATP binding"/>
    <property type="evidence" value="ECO:0007669"/>
    <property type="project" value="UniProtKB-UniRule"/>
</dbReference>
<dbReference type="GO" id="GO:0004823">
    <property type="term" value="F:leucine-tRNA ligase activity"/>
    <property type="evidence" value="ECO:0007669"/>
    <property type="project" value="UniProtKB-UniRule"/>
</dbReference>
<dbReference type="GO" id="GO:0006429">
    <property type="term" value="P:leucyl-tRNA aminoacylation"/>
    <property type="evidence" value="ECO:0007669"/>
    <property type="project" value="UniProtKB-UniRule"/>
</dbReference>
<dbReference type="CDD" id="cd07958">
    <property type="entry name" value="Anticodon_Ia_Leu_BEm"/>
    <property type="match status" value="1"/>
</dbReference>
<dbReference type="CDD" id="cd00812">
    <property type="entry name" value="LeuRS_core"/>
    <property type="match status" value="1"/>
</dbReference>
<dbReference type="FunFam" id="1.10.730.10:FF:000012">
    <property type="entry name" value="Leucine--tRNA ligase"/>
    <property type="match status" value="1"/>
</dbReference>
<dbReference type="FunFam" id="3.40.50.620:FF:000056">
    <property type="entry name" value="Leucine--tRNA ligase"/>
    <property type="match status" value="1"/>
</dbReference>
<dbReference type="FunFam" id="3.40.50.620:FF:000077">
    <property type="entry name" value="Leucine--tRNA ligase"/>
    <property type="match status" value="1"/>
</dbReference>
<dbReference type="FunFam" id="1.10.730.10:FF:000011">
    <property type="entry name" value="Leucine--tRNA ligase chloroplastic/mitochondrial"/>
    <property type="match status" value="1"/>
</dbReference>
<dbReference type="Gene3D" id="3.40.50.620">
    <property type="entry name" value="HUPs"/>
    <property type="match status" value="2"/>
</dbReference>
<dbReference type="Gene3D" id="1.10.730.10">
    <property type="entry name" value="Isoleucyl-tRNA Synthetase, Domain 1"/>
    <property type="match status" value="1"/>
</dbReference>
<dbReference type="Gene3D" id="3.90.740.10">
    <property type="entry name" value="Valyl/Leucyl/Isoleucyl-tRNA synthetase, editing domain"/>
    <property type="match status" value="1"/>
</dbReference>
<dbReference type="HAMAP" id="MF_00049_B">
    <property type="entry name" value="Leu_tRNA_synth_B"/>
    <property type="match status" value="1"/>
</dbReference>
<dbReference type="InterPro" id="IPR001412">
    <property type="entry name" value="aa-tRNA-synth_I_CS"/>
</dbReference>
<dbReference type="InterPro" id="IPR002300">
    <property type="entry name" value="aa-tRNA-synth_Ia"/>
</dbReference>
<dbReference type="InterPro" id="IPR002302">
    <property type="entry name" value="Leu-tRNA-ligase"/>
</dbReference>
<dbReference type="InterPro" id="IPR025709">
    <property type="entry name" value="Leu_tRNA-synth_edit"/>
</dbReference>
<dbReference type="InterPro" id="IPR013155">
    <property type="entry name" value="M/V/L/I-tRNA-synth_anticd-bd"/>
</dbReference>
<dbReference type="InterPro" id="IPR015413">
    <property type="entry name" value="Methionyl/Leucyl_tRNA_Synth"/>
</dbReference>
<dbReference type="InterPro" id="IPR014729">
    <property type="entry name" value="Rossmann-like_a/b/a_fold"/>
</dbReference>
<dbReference type="InterPro" id="IPR009080">
    <property type="entry name" value="tRNAsynth_Ia_anticodon-bd"/>
</dbReference>
<dbReference type="InterPro" id="IPR009008">
    <property type="entry name" value="Val/Leu/Ile-tRNA-synth_edit"/>
</dbReference>
<dbReference type="NCBIfam" id="TIGR00396">
    <property type="entry name" value="leuS_bact"/>
    <property type="match status" value="1"/>
</dbReference>
<dbReference type="PANTHER" id="PTHR43740:SF2">
    <property type="entry name" value="LEUCINE--TRNA LIGASE, MITOCHONDRIAL"/>
    <property type="match status" value="1"/>
</dbReference>
<dbReference type="PANTHER" id="PTHR43740">
    <property type="entry name" value="LEUCYL-TRNA SYNTHETASE"/>
    <property type="match status" value="1"/>
</dbReference>
<dbReference type="Pfam" id="PF08264">
    <property type="entry name" value="Anticodon_1"/>
    <property type="match status" value="1"/>
</dbReference>
<dbReference type="Pfam" id="PF00133">
    <property type="entry name" value="tRNA-synt_1"/>
    <property type="match status" value="2"/>
</dbReference>
<dbReference type="Pfam" id="PF13603">
    <property type="entry name" value="tRNA-synt_1_2"/>
    <property type="match status" value="1"/>
</dbReference>
<dbReference type="Pfam" id="PF09334">
    <property type="entry name" value="tRNA-synt_1g"/>
    <property type="match status" value="1"/>
</dbReference>
<dbReference type="PRINTS" id="PR00985">
    <property type="entry name" value="TRNASYNTHLEU"/>
</dbReference>
<dbReference type="SUPFAM" id="SSF47323">
    <property type="entry name" value="Anticodon-binding domain of a subclass of class I aminoacyl-tRNA synthetases"/>
    <property type="match status" value="1"/>
</dbReference>
<dbReference type="SUPFAM" id="SSF52374">
    <property type="entry name" value="Nucleotidylyl transferase"/>
    <property type="match status" value="1"/>
</dbReference>
<dbReference type="SUPFAM" id="SSF50677">
    <property type="entry name" value="ValRS/IleRS/LeuRS editing domain"/>
    <property type="match status" value="1"/>
</dbReference>
<dbReference type="PROSITE" id="PS00178">
    <property type="entry name" value="AA_TRNA_LIGASE_I"/>
    <property type="match status" value="1"/>
</dbReference>
<proteinExistence type="inferred from homology"/>
<evidence type="ECO:0000255" key="1">
    <source>
        <dbReference type="HAMAP-Rule" id="MF_00049"/>
    </source>
</evidence>
<feature type="chain" id="PRO_0000152098" description="Leucine--tRNA ligase">
    <location>
        <begin position="1"/>
        <end position="833"/>
    </location>
</feature>
<feature type="short sequence motif" description="'HIGH' region">
    <location>
        <begin position="41"/>
        <end position="52"/>
    </location>
</feature>
<feature type="short sequence motif" description="'KMSKS' region">
    <location>
        <begin position="610"/>
        <end position="614"/>
    </location>
</feature>
<feature type="binding site" evidence="1">
    <location>
        <position position="613"/>
    </location>
    <ligand>
        <name>ATP</name>
        <dbReference type="ChEBI" id="CHEBI:30616"/>
    </ligand>
</feature>
<organism>
    <name type="scientific">Streptococcus pyogenes serotype M3 (strain ATCC BAA-595 / MGAS315)</name>
    <dbReference type="NCBI Taxonomy" id="198466"/>
    <lineage>
        <taxon>Bacteria</taxon>
        <taxon>Bacillati</taxon>
        <taxon>Bacillota</taxon>
        <taxon>Bacilli</taxon>
        <taxon>Lactobacillales</taxon>
        <taxon>Streptococcaceae</taxon>
        <taxon>Streptococcus</taxon>
    </lineage>
</organism>